<proteinExistence type="inferred from homology"/>
<feature type="signal peptide" evidence="1">
    <location>
        <begin position="1"/>
        <end position="20"/>
    </location>
</feature>
<feature type="chain" id="PRO_0000203784" description="Seripauperin-7">
    <location>
        <begin position="21"/>
        <end position="55"/>
    </location>
</feature>
<name>PAU7_YEAST</name>
<keyword id="KW-1185">Reference proteome</keyword>
<keyword id="KW-0732">Signal</keyword>
<organism>
    <name type="scientific">Saccharomyces cerevisiae (strain ATCC 204508 / S288c)</name>
    <name type="common">Baker's yeast</name>
    <dbReference type="NCBI Taxonomy" id="559292"/>
    <lineage>
        <taxon>Eukaryota</taxon>
        <taxon>Fungi</taxon>
        <taxon>Dikarya</taxon>
        <taxon>Ascomycota</taxon>
        <taxon>Saccharomycotina</taxon>
        <taxon>Saccharomycetes</taxon>
        <taxon>Saccharomycetales</taxon>
        <taxon>Saccharomycetaceae</taxon>
        <taxon>Saccharomyces</taxon>
    </lineage>
</organism>
<reference key="1">
    <citation type="submission" date="1994-02" db="EMBL/GenBank/DDBJ databases">
        <title>Sequencing of chromosome I of Saccharomyces cerevisiae: analysis of the 52 Kbp CDC15-FLO1-PHO11-YAR074 region.</title>
        <authorList>
            <person name="Bussey H."/>
            <person name="Keng T."/>
            <person name="Storms R.K."/>
            <person name="Vo D."/>
            <person name="Zhong W."/>
            <person name="Fortin N."/>
            <person name="Barton A.B."/>
            <person name="Kaback D.B."/>
            <person name="Clark M.W."/>
        </authorList>
    </citation>
    <scope>NUCLEOTIDE SEQUENCE [GENOMIC DNA]</scope>
    <source>
        <strain>ATCC 204511 / S288c / AB972</strain>
    </source>
</reference>
<reference key="2">
    <citation type="journal article" date="1995" name="Proc. Natl. Acad. Sci. U.S.A.">
        <title>The nucleotide sequence of chromosome I from Saccharomyces cerevisiae.</title>
        <authorList>
            <person name="Bussey H."/>
            <person name="Kaback D.B."/>
            <person name="Zhong W.-W."/>
            <person name="Vo D.H."/>
            <person name="Clark M.W."/>
            <person name="Fortin N."/>
            <person name="Hall J."/>
            <person name="Ouellette B.F.F."/>
            <person name="Keng T."/>
            <person name="Barton A.B."/>
            <person name="Su Y."/>
            <person name="Davies C.J."/>
            <person name="Storms R.K."/>
        </authorList>
    </citation>
    <scope>NUCLEOTIDE SEQUENCE [LARGE SCALE GENOMIC DNA]</scope>
    <source>
        <strain>ATCC 204508 / S288c</strain>
    </source>
</reference>
<reference key="3">
    <citation type="journal article" date="2014" name="G3 (Bethesda)">
        <title>The reference genome sequence of Saccharomyces cerevisiae: Then and now.</title>
        <authorList>
            <person name="Engel S.R."/>
            <person name="Dietrich F.S."/>
            <person name="Fisk D.G."/>
            <person name="Binkley G."/>
            <person name="Balakrishnan R."/>
            <person name="Costanzo M.C."/>
            <person name="Dwight S.S."/>
            <person name="Hitz B.C."/>
            <person name="Karra K."/>
            <person name="Nash R.S."/>
            <person name="Weng S."/>
            <person name="Wong E.D."/>
            <person name="Lloyd P."/>
            <person name="Skrzypek M.S."/>
            <person name="Miyasato S.R."/>
            <person name="Simison M."/>
            <person name="Cherry J.M."/>
        </authorList>
    </citation>
    <scope>GENOME REANNOTATION</scope>
    <source>
        <strain>ATCC 204508 / S288c</strain>
    </source>
</reference>
<reference key="4">
    <citation type="journal article" date="2007" name="Genome Res.">
        <title>Approaching a complete repository of sequence-verified protein-encoding clones for Saccharomyces cerevisiae.</title>
        <authorList>
            <person name="Hu Y."/>
            <person name="Rolfs A."/>
            <person name="Bhullar B."/>
            <person name="Murthy T.V.S."/>
            <person name="Zhu C."/>
            <person name="Berger M.F."/>
            <person name="Camargo A.A."/>
            <person name="Kelley F."/>
            <person name="McCarron S."/>
            <person name="Jepson D."/>
            <person name="Richardson A."/>
            <person name="Raphael J."/>
            <person name="Moreira D."/>
            <person name="Taycher E."/>
            <person name="Zuo D."/>
            <person name="Mohr S."/>
            <person name="Kane M.F."/>
            <person name="Williamson J."/>
            <person name="Simpson A.J.G."/>
            <person name="Bulyk M.L."/>
            <person name="Harlow E."/>
            <person name="Marsischky G."/>
            <person name="Kolodner R.D."/>
            <person name="LaBaer J."/>
        </authorList>
    </citation>
    <scope>NUCLEOTIDE SEQUENCE [GENOMIC DNA]</scope>
    <source>
        <strain>ATCC 204508 / S288c</strain>
    </source>
</reference>
<reference key="5">
    <citation type="journal article" date="2009" name="Microbiology">
        <title>Functional analyses of PAU genes in Saccharomyces cerevisiae.</title>
        <authorList>
            <person name="Luo Z."/>
            <person name="van Vuuren H.J."/>
        </authorList>
    </citation>
    <scope>CONFIRMATION OF STOP CODON</scope>
    <source>
        <strain>ATCC 201389 / BY4742</strain>
    </source>
</reference>
<evidence type="ECO:0000255" key="1"/>
<evidence type="ECO:0000305" key="2"/>
<accession>P39545</accession>
<accession>D6VPM7</accession>
<sequence length="55" mass="5674">MVKLTSIAAGVAAIAAGASAAATTTLSQSDERVNLVELGVYVSDIRAHLAEYYSF</sequence>
<comment type="similarity">
    <text evidence="2">Belongs to the SRP1/TIP1 family. Seripauperin subfamily.</text>
</comment>
<comment type="caution">
    <text evidence="2">Has a stop codon at position 56, which shortens the ORF when compared to other seripauperin family members.</text>
</comment>
<protein>
    <recommendedName>
        <fullName>Seripauperin-7</fullName>
    </recommendedName>
</protein>
<dbReference type="EMBL" id="L28920">
    <property type="protein sequence ID" value="AAC09487.1"/>
    <property type="molecule type" value="Genomic_DNA"/>
</dbReference>
<dbReference type="EMBL" id="AY692783">
    <property type="protein sequence ID" value="AAT92802.1"/>
    <property type="molecule type" value="Genomic_DNA"/>
</dbReference>
<dbReference type="EMBL" id="BK006935">
    <property type="protein sequence ID" value="DAA06997.1"/>
    <property type="molecule type" value="Genomic_DNA"/>
</dbReference>
<dbReference type="RefSeq" id="NP_009412.1">
    <property type="nucleotide sequence ID" value="NM_001178219.1"/>
</dbReference>
<dbReference type="BioGRID" id="31802">
    <property type="interactions" value="12"/>
</dbReference>
<dbReference type="DIP" id="DIP-2795N"/>
<dbReference type="FunCoup" id="P39545">
    <property type="interactions" value="35"/>
</dbReference>
<dbReference type="IntAct" id="P39545">
    <property type="interactions" value="2"/>
</dbReference>
<dbReference type="MINT" id="P39545"/>
<dbReference type="STRING" id="4932.YAR020C"/>
<dbReference type="PaxDb" id="4932-YAR020C"/>
<dbReference type="EnsemblFungi" id="YAR020C_mRNA">
    <property type="protein sequence ID" value="YAR020C"/>
    <property type="gene ID" value="YAR020C"/>
</dbReference>
<dbReference type="GeneID" id="851275"/>
<dbReference type="KEGG" id="sce:YAR020C"/>
<dbReference type="AGR" id="SGD:S000000073"/>
<dbReference type="SGD" id="S000000073">
    <property type="gene designation" value="PAU7"/>
</dbReference>
<dbReference type="VEuPathDB" id="FungiDB:YAR020C"/>
<dbReference type="GeneTree" id="ENSGT00940000176276"/>
<dbReference type="HOGENOM" id="CLU_2838310_0_0_1"/>
<dbReference type="InParanoid" id="P39545"/>
<dbReference type="OrthoDB" id="4069694at2759"/>
<dbReference type="BioCyc" id="YEAST:G3O-28876-MONOMER"/>
<dbReference type="BioGRID-ORCS" id="851275">
    <property type="hits" value="2 hits in 10 CRISPR screens"/>
</dbReference>
<dbReference type="PRO" id="PR:P39545"/>
<dbReference type="Proteomes" id="UP000002311">
    <property type="component" value="Chromosome I"/>
</dbReference>
<dbReference type="RNAct" id="P39545">
    <property type="molecule type" value="protein"/>
</dbReference>
<dbReference type="InterPro" id="IPR000992">
    <property type="entry name" value="SRP1_TIP1"/>
</dbReference>
<dbReference type="InterPro" id="IPR050788">
    <property type="entry name" value="Yeast_SRP1/TIP1_CWP"/>
</dbReference>
<dbReference type="PANTHER" id="PTHR31002:SF34">
    <property type="entry name" value="CELL WALL PROTEIN CWP1-RELATED"/>
    <property type="match status" value="1"/>
</dbReference>
<dbReference type="PANTHER" id="PTHR31002">
    <property type="entry name" value="SERIPAUPERIN"/>
    <property type="match status" value="1"/>
</dbReference>
<dbReference type="Pfam" id="PF00660">
    <property type="entry name" value="SRP1_TIP1"/>
    <property type="match status" value="1"/>
</dbReference>
<gene>
    <name type="primary">PAU7</name>
    <name type="ordered locus">YAR020C</name>
</gene>